<feature type="chain" id="PRO_0000388543" description="tRNA/tmRNA (uracil-C(5))-methyltransferase">
    <location>
        <begin position="1"/>
        <end position="361"/>
    </location>
</feature>
<feature type="active site" description="Nucleophile" evidence="1">
    <location>
        <position position="319"/>
    </location>
</feature>
<feature type="active site" description="Proton acceptor" evidence="1">
    <location>
        <position position="353"/>
    </location>
</feature>
<feature type="binding site" evidence="1">
    <location>
        <position position="183"/>
    </location>
    <ligand>
        <name>S-adenosyl-L-methionine</name>
        <dbReference type="ChEBI" id="CHEBI:59789"/>
    </ligand>
</feature>
<feature type="binding site" evidence="1">
    <location>
        <position position="211"/>
    </location>
    <ligand>
        <name>S-adenosyl-L-methionine</name>
        <dbReference type="ChEBI" id="CHEBI:59789"/>
    </ligand>
</feature>
<feature type="binding site" evidence="1">
    <location>
        <position position="216"/>
    </location>
    <ligand>
        <name>S-adenosyl-L-methionine</name>
        <dbReference type="ChEBI" id="CHEBI:59789"/>
    </ligand>
</feature>
<feature type="binding site" evidence="1">
    <location>
        <position position="232"/>
    </location>
    <ligand>
        <name>S-adenosyl-L-methionine</name>
        <dbReference type="ChEBI" id="CHEBI:59789"/>
    </ligand>
</feature>
<feature type="binding site" evidence="1">
    <location>
        <position position="294"/>
    </location>
    <ligand>
        <name>S-adenosyl-L-methionine</name>
        <dbReference type="ChEBI" id="CHEBI:59789"/>
    </ligand>
</feature>
<proteinExistence type="inferred from homology"/>
<keyword id="KW-0489">Methyltransferase</keyword>
<keyword id="KW-0949">S-adenosyl-L-methionine</keyword>
<keyword id="KW-0808">Transferase</keyword>
<keyword id="KW-0819">tRNA processing</keyword>
<accession>B0VCX5</accession>
<evidence type="ECO:0000255" key="1">
    <source>
        <dbReference type="HAMAP-Rule" id="MF_01011"/>
    </source>
</evidence>
<comment type="function">
    <text evidence="1">Dual-specificity methyltransferase that catalyzes the formation of 5-methyluridine at position 54 (m5U54) in all tRNAs, and that of position 341 (m5U341) in tmRNA (transfer-mRNA).</text>
</comment>
<comment type="catalytic activity">
    <reaction evidence="1">
        <text>uridine(54) in tRNA + S-adenosyl-L-methionine = 5-methyluridine(54) in tRNA + S-adenosyl-L-homocysteine + H(+)</text>
        <dbReference type="Rhea" id="RHEA:42712"/>
        <dbReference type="Rhea" id="RHEA-COMP:10167"/>
        <dbReference type="Rhea" id="RHEA-COMP:10193"/>
        <dbReference type="ChEBI" id="CHEBI:15378"/>
        <dbReference type="ChEBI" id="CHEBI:57856"/>
        <dbReference type="ChEBI" id="CHEBI:59789"/>
        <dbReference type="ChEBI" id="CHEBI:65315"/>
        <dbReference type="ChEBI" id="CHEBI:74447"/>
        <dbReference type="EC" id="2.1.1.35"/>
    </reaction>
</comment>
<comment type="catalytic activity">
    <reaction evidence="1">
        <text>uridine(341) in tmRNA + S-adenosyl-L-methionine = 5-methyluridine(341) in tmRNA + S-adenosyl-L-homocysteine + H(+)</text>
        <dbReference type="Rhea" id="RHEA:43612"/>
        <dbReference type="Rhea" id="RHEA-COMP:10630"/>
        <dbReference type="Rhea" id="RHEA-COMP:10631"/>
        <dbReference type="ChEBI" id="CHEBI:15378"/>
        <dbReference type="ChEBI" id="CHEBI:57856"/>
        <dbReference type="ChEBI" id="CHEBI:59789"/>
        <dbReference type="ChEBI" id="CHEBI:65315"/>
        <dbReference type="ChEBI" id="CHEBI:74447"/>
    </reaction>
</comment>
<comment type="similarity">
    <text evidence="1">Belongs to the class I-like SAM-binding methyltransferase superfamily. RNA M5U methyltransferase family. TrmA subfamily.</text>
</comment>
<name>TRMA_ACIBY</name>
<organism>
    <name type="scientific">Acinetobacter baumannii (strain AYE)</name>
    <dbReference type="NCBI Taxonomy" id="509173"/>
    <lineage>
        <taxon>Bacteria</taxon>
        <taxon>Pseudomonadati</taxon>
        <taxon>Pseudomonadota</taxon>
        <taxon>Gammaproteobacteria</taxon>
        <taxon>Moraxellales</taxon>
        <taxon>Moraxellaceae</taxon>
        <taxon>Acinetobacter</taxon>
        <taxon>Acinetobacter calcoaceticus/baumannii complex</taxon>
    </lineage>
</organism>
<gene>
    <name evidence="1" type="primary">trmA</name>
    <name type="ordered locus">ABAYE2110</name>
</gene>
<reference key="1">
    <citation type="journal article" date="2008" name="PLoS ONE">
        <title>Comparative analysis of Acinetobacters: three genomes for three lifestyles.</title>
        <authorList>
            <person name="Vallenet D."/>
            <person name="Nordmann P."/>
            <person name="Barbe V."/>
            <person name="Poirel L."/>
            <person name="Mangenot S."/>
            <person name="Bataille E."/>
            <person name="Dossat C."/>
            <person name="Gas S."/>
            <person name="Kreimeyer A."/>
            <person name="Lenoble P."/>
            <person name="Oztas S."/>
            <person name="Poulain J."/>
            <person name="Segurens B."/>
            <person name="Robert C."/>
            <person name="Abergel C."/>
            <person name="Claverie J.-M."/>
            <person name="Raoult D."/>
            <person name="Medigue C."/>
            <person name="Weissenbach J."/>
            <person name="Cruveiller S."/>
        </authorList>
    </citation>
    <scope>NUCLEOTIDE SEQUENCE [LARGE SCALE GENOMIC DNA]</scope>
    <source>
        <strain>AYE</strain>
    </source>
</reference>
<dbReference type="EC" id="2.1.1.-" evidence="1"/>
<dbReference type="EC" id="2.1.1.35" evidence="1"/>
<dbReference type="EMBL" id="CU459141">
    <property type="protein sequence ID" value="CAM86983.1"/>
    <property type="molecule type" value="Genomic_DNA"/>
</dbReference>
<dbReference type="RefSeq" id="WP_000204689.1">
    <property type="nucleotide sequence ID" value="NC_010410.1"/>
</dbReference>
<dbReference type="SMR" id="B0VCX5"/>
<dbReference type="EnsemblBacteria" id="CAM86983">
    <property type="protein sequence ID" value="CAM86983"/>
    <property type="gene ID" value="ABAYE2110"/>
</dbReference>
<dbReference type="KEGG" id="aby:ABAYE2110"/>
<dbReference type="HOGENOM" id="CLU_043022_0_0_6"/>
<dbReference type="GO" id="GO:0005829">
    <property type="term" value="C:cytosol"/>
    <property type="evidence" value="ECO:0007669"/>
    <property type="project" value="TreeGrafter"/>
</dbReference>
<dbReference type="GO" id="GO:0019843">
    <property type="term" value="F:rRNA binding"/>
    <property type="evidence" value="ECO:0007669"/>
    <property type="project" value="TreeGrafter"/>
</dbReference>
<dbReference type="GO" id="GO:0030697">
    <property type="term" value="F:tRNA (uracil(54)-C5)-methyltransferase activity, S-adenosyl methionine-dependent"/>
    <property type="evidence" value="ECO:0007669"/>
    <property type="project" value="UniProtKB-UniRule"/>
</dbReference>
<dbReference type="GO" id="GO:0000049">
    <property type="term" value="F:tRNA binding"/>
    <property type="evidence" value="ECO:0007669"/>
    <property type="project" value="TreeGrafter"/>
</dbReference>
<dbReference type="GO" id="GO:0030488">
    <property type="term" value="P:tRNA methylation"/>
    <property type="evidence" value="ECO:0007669"/>
    <property type="project" value="UniProtKB-UniRule"/>
</dbReference>
<dbReference type="CDD" id="cd02440">
    <property type="entry name" value="AdoMet_MTases"/>
    <property type="match status" value="1"/>
</dbReference>
<dbReference type="FunFam" id="2.40.50.1070:FF:000001">
    <property type="entry name" value="tRNA/tmRNA (uracil-C(5))-methyltransferase"/>
    <property type="match status" value="1"/>
</dbReference>
<dbReference type="FunFam" id="3.40.50.150:FF:000012">
    <property type="entry name" value="tRNA/tmRNA (uracil-C(5))-methyltransferase"/>
    <property type="match status" value="1"/>
</dbReference>
<dbReference type="Gene3D" id="2.40.50.1070">
    <property type="match status" value="1"/>
</dbReference>
<dbReference type="Gene3D" id="3.40.50.150">
    <property type="entry name" value="Vaccinia Virus protein VP39"/>
    <property type="match status" value="1"/>
</dbReference>
<dbReference type="HAMAP" id="MF_01011">
    <property type="entry name" value="RNA_methyltr_TrmA"/>
    <property type="match status" value="1"/>
</dbReference>
<dbReference type="InterPro" id="IPR030390">
    <property type="entry name" value="MeTrfase_TrmA_AS"/>
</dbReference>
<dbReference type="InterPro" id="IPR030391">
    <property type="entry name" value="MeTrfase_TrmA_CS"/>
</dbReference>
<dbReference type="InterPro" id="IPR029063">
    <property type="entry name" value="SAM-dependent_MTases_sf"/>
</dbReference>
<dbReference type="InterPro" id="IPR011869">
    <property type="entry name" value="TrmA_MeTrfase"/>
</dbReference>
<dbReference type="InterPro" id="IPR010280">
    <property type="entry name" value="U5_MeTrfase_fam"/>
</dbReference>
<dbReference type="NCBIfam" id="TIGR02143">
    <property type="entry name" value="trmA_only"/>
    <property type="match status" value="1"/>
</dbReference>
<dbReference type="PANTHER" id="PTHR47790">
    <property type="entry name" value="TRNA/TMRNA (URACIL-C(5))-METHYLTRANSFERASE"/>
    <property type="match status" value="1"/>
</dbReference>
<dbReference type="PANTHER" id="PTHR47790:SF2">
    <property type="entry name" value="TRNA_TMRNA (URACIL-C(5))-METHYLTRANSFERASE"/>
    <property type="match status" value="1"/>
</dbReference>
<dbReference type="Pfam" id="PF05958">
    <property type="entry name" value="tRNA_U5-meth_tr"/>
    <property type="match status" value="1"/>
</dbReference>
<dbReference type="SUPFAM" id="SSF53335">
    <property type="entry name" value="S-adenosyl-L-methionine-dependent methyltransferases"/>
    <property type="match status" value="1"/>
</dbReference>
<dbReference type="PROSITE" id="PS51687">
    <property type="entry name" value="SAM_MT_RNA_M5U"/>
    <property type="match status" value="1"/>
</dbReference>
<dbReference type="PROSITE" id="PS01230">
    <property type="entry name" value="TRMA_1"/>
    <property type="match status" value="1"/>
</dbReference>
<dbReference type="PROSITE" id="PS01231">
    <property type="entry name" value="TRMA_2"/>
    <property type="match status" value="1"/>
</dbReference>
<sequence>MTSSYRQQLQAKIDRITTQFSEFTPPTLEVFESPEQHFRMRAEFRIWHTENDMFYAMFERNGDGKQKTVVRIDEFPIADKSINDLMPLLLAELKANSLLSQRLFEVDFLATLSGEMLVTLIYHRKLNQEWEQAAKALAEKLNIKIMGRSRGQKIVIGDDFVVEEFELLNRSFKYKQIESSFTQPNAQVCKKMLQWACDAAEGSKKHLLELYCGNGNFTLPLSLKFERVLATELAKSSVYAAQWNIEQNQIDNIQVARLSAEEFTQAYQGEREFRRLQEADIDIQSYDFGTVFVDPPRAGIDDETLKLLQGFERIIYISCNPDTLYENLKTLTQTHRVTKFALFDQFPYTHHVESGVLLEKI</sequence>
<protein>
    <recommendedName>
        <fullName evidence="1">tRNA/tmRNA (uracil-C(5))-methyltransferase</fullName>
        <ecNumber evidence="1">2.1.1.-</ecNumber>
        <ecNumber evidence="1">2.1.1.35</ecNumber>
    </recommendedName>
    <alternativeName>
        <fullName evidence="1">tRNA (uracil(54)-C(5))-methyltransferase</fullName>
    </alternativeName>
    <alternativeName>
        <fullName evidence="1">tRNA(m5U54)-methyltransferase</fullName>
        <shortName evidence="1">RUMT</shortName>
    </alternativeName>
    <alternativeName>
        <fullName evidence="1">tmRNA (uracil(341)-C(5))-methyltransferase</fullName>
    </alternativeName>
</protein>